<name>ORR_ACESD</name>
<comment type="function">
    <text evidence="2 3">Involved in the ornithine fermentation pathway. Catalyzes the conversion of L-ornithine to D-ornithine (PubMed:10715017, PubMed:19251850). OR could also racemize basic amino acids such as lysine and arginine (PubMed:19251850). Serine, asparagine and alanine could be also converted by OR, but at a lower rate (PubMed:19251850).</text>
</comment>
<comment type="catalytic activity">
    <reaction evidence="2 3">
        <text>L-ornithine = D-ornithine</text>
        <dbReference type="Rhea" id="RHEA:11584"/>
        <dbReference type="ChEBI" id="CHEBI:46911"/>
        <dbReference type="ChEBI" id="CHEBI:57668"/>
        <dbReference type="EC" id="5.1.1.12"/>
    </reaction>
</comment>
<comment type="cofactor">
    <cofactor evidence="2 3">
        <name>pyridoxal 5'-phosphate</name>
        <dbReference type="ChEBI" id="CHEBI:597326"/>
    </cofactor>
</comment>
<comment type="biophysicochemical properties">
    <kinetics>
        <KM evidence="3">520 uM for L-ornithine</KM>
        <KM evidence="2">770 uM for L-ornithine</KM>
        <text evidence="2 3">kcat is 1660 sec(-1) for L-ornithine as substrate (PubMed:19251850). kcat is 980 sec(-1) for L-ornithine as substrate (PubMed:10715017).</text>
    </kinetics>
    <phDependence>
        <text evidence="2">Optimum pH is 8.5.</text>
    </phDependence>
</comment>
<comment type="subunit">
    <text evidence="2 3">Homodimer.</text>
</comment>
<comment type="similarity">
    <text evidence="5">Belongs to the alanine racemase family.</text>
</comment>
<reference key="1">
    <citation type="submission" date="2008-04" db="EMBL/GenBank/DDBJ databases">
        <authorList>
            <consortium name="Genoscope - CEA"/>
        </authorList>
    </citation>
    <scope>NUCLEOTIDE SEQUENCE [GENOMIC DNA]</scope>
    <source>
        <strain>ATCC 12662 / DSM 519 / JCM 1433 / CCUG 9281 / NCIMB 10654 / HF</strain>
    </source>
</reference>
<reference key="2">
    <citation type="journal article" date="2009" name="J. Bacteriol.">
        <title>A conserved gene cluster rules anaerobic oxidative degradation of L-ornithine.</title>
        <authorList>
            <person name="Fonknechten N."/>
            <person name="Perret A."/>
            <person name="Perchat N."/>
            <person name="Tricot S."/>
            <person name="Lechaplais C."/>
            <person name="Vallenet D."/>
            <person name="Vergne C."/>
            <person name="Zaparucha A."/>
            <person name="Le Paslier D."/>
            <person name="Weissenbach J."/>
            <person name="Salanoubat M."/>
        </authorList>
    </citation>
    <scope>NUCLEOTIDE SEQUENCE [GENOMIC DNA]</scope>
    <scope>FUNCTION</scope>
    <scope>CATALYTIC ACTIVITY</scope>
    <scope>BIOPHYSICOCHEMICAL PROPERTIES</scope>
    <scope>COFACTOR</scope>
    <scope>SUBSTRATE SPECIFICITY</scope>
    <scope>SUBUNIT</scope>
    <source>
        <strain>ATCC 12662 / DSM 519 / JCM 1433 / CCUG 9281 / NCIMB 10654 / HF</strain>
    </source>
</reference>
<reference key="3">
    <citation type="journal article" date="2010" name="BMC Genomics">
        <title>Clostridium sticklandii, a specialist in amino acid degradation:revisiting its metabolism through its genome sequence.</title>
        <authorList>
            <person name="Fonknechten N."/>
            <person name="Chaussonnerie S."/>
            <person name="Tricot S."/>
            <person name="Lajus A."/>
            <person name="Andreesen J.R."/>
            <person name="Perchat N."/>
            <person name="Pelletier E."/>
            <person name="Gouyvenoux M."/>
            <person name="Barbe V."/>
            <person name="Salanoubat M."/>
            <person name="Le Paslier D."/>
            <person name="Weissenbach J."/>
            <person name="Cohen G.N."/>
            <person name="Kreimeyer A."/>
        </authorList>
    </citation>
    <scope>NUCLEOTIDE SEQUENCE [LARGE SCALE GENOMIC DNA]</scope>
    <source>
        <strain>ATCC 12662 / DSM 519 / JCM 1433 / CCUG 9281 / NCIMB 10654 / HF</strain>
    </source>
</reference>
<reference key="4">
    <citation type="journal article" date="2000" name="J. Bacteriol.">
        <title>Purification and properties of ornithine racemase from Clostridium sticklandii.</title>
        <authorList>
            <person name="Chen H.P."/>
            <person name="Lin C.F."/>
            <person name="Lee Y.J."/>
            <person name="Tsay S.S."/>
            <person name="Wu S.H."/>
        </authorList>
    </citation>
    <scope>FUNCTION</scope>
    <scope>CATALYTIC ACTIVITY</scope>
    <scope>BIOPHYSICOCHEMICAL PROPERTIES</scope>
    <scope>COFACTOR</scope>
    <scope>SUBUNIT</scope>
    <source>
        <strain>ATCC 12662 / DSM 519 / JCM 1433 / CCUG 9281 / NCIMB 10654 / HF</strain>
    </source>
</reference>
<gene>
    <name evidence="4" type="primary">orr</name>
    <name evidence="6" type="ordered locus">CLOST_1288</name>
</gene>
<protein>
    <recommendedName>
        <fullName evidence="4">Ornithine racemase</fullName>
        <shortName evidence="4">OR</shortName>
        <ecNumber evidence="2 3">5.1.1.12</ecNumber>
    </recommendedName>
</protein>
<keyword id="KW-0413">Isomerase</keyword>
<keyword id="KW-0663">Pyridoxal phosphate</keyword>
<keyword id="KW-1185">Reference proteome</keyword>
<sequence>MYPKITIDINKLRDNATFIKNLCEKGGCKTALVVKSMCANHDIVKELDSVEVDYFADSRIQNLKKLKDLKTKKMLLRIPMLCEVEDVVKYADISMNSELDTLKALNKAAKTLNKVHSVIIMVDLGDLREGYFEAEDLKENIKEIIKLENIEIKGIGVNLTCYGAVIPKNDNLSRLCDIADELRTEFNLELPIVSGGNSSSIYLIDKGELPEGITNLRVGESMLLGRETAYGEDIIGMNNDVFELKCQIVELKEKPSLPIGEIGVDAFGNKPYYEDKGIRKRAILAIGQQDTDISSLMPIDDKLEILGASSDHLIVDVSDSNTSYKVGDIITFRMGYGALLKGFTSEYIEKELL</sequence>
<organism>
    <name type="scientific">Acetoanaerobium sticklandii (strain ATCC 12662 / DSM 519 / JCM 1433 / CCUG 9281 / NCIMB 10654 / HF)</name>
    <name type="common">Clostridium sticklandii</name>
    <dbReference type="NCBI Taxonomy" id="499177"/>
    <lineage>
        <taxon>Bacteria</taxon>
        <taxon>Bacillati</taxon>
        <taxon>Bacillota</taxon>
        <taxon>Clostridia</taxon>
        <taxon>Peptostreptococcales</taxon>
        <taxon>Filifactoraceae</taxon>
        <taxon>Acetoanaerobium</taxon>
    </lineage>
</organism>
<proteinExistence type="evidence at protein level"/>
<dbReference type="EC" id="5.1.1.12" evidence="2 3"/>
<dbReference type="EMBL" id="CU695250">
    <property type="protein sequence ID" value="CAQ42981.1"/>
    <property type="molecule type" value="Genomic_DNA"/>
</dbReference>
<dbReference type="EMBL" id="FP565809">
    <property type="protein sequence ID" value="CBH21408.1"/>
    <property type="molecule type" value="Genomic_DNA"/>
</dbReference>
<dbReference type="SMR" id="C1FW08"/>
<dbReference type="STRING" id="1511.CLOST_1288"/>
<dbReference type="KEGG" id="cst:CLOST_1288"/>
<dbReference type="eggNOG" id="COG3457">
    <property type="taxonomic scope" value="Bacteria"/>
</dbReference>
<dbReference type="HOGENOM" id="CLU_067103_0_0_9"/>
<dbReference type="BioCyc" id="MetaCyc:MONOMER-12478"/>
<dbReference type="Proteomes" id="UP000007041">
    <property type="component" value="Chromosome"/>
</dbReference>
<dbReference type="GO" id="GO:0005829">
    <property type="term" value="C:cytosol"/>
    <property type="evidence" value="ECO:0007669"/>
    <property type="project" value="TreeGrafter"/>
</dbReference>
<dbReference type="GO" id="GO:0008784">
    <property type="term" value="F:alanine racemase activity"/>
    <property type="evidence" value="ECO:0007669"/>
    <property type="project" value="TreeGrafter"/>
</dbReference>
<dbReference type="GO" id="GO:0050157">
    <property type="term" value="F:ornithine racemase activity"/>
    <property type="evidence" value="ECO:0000314"/>
    <property type="project" value="UniProtKB"/>
</dbReference>
<dbReference type="GO" id="GO:0070280">
    <property type="term" value="F:pyridoxal binding"/>
    <property type="evidence" value="ECO:0000314"/>
    <property type="project" value="UniProtKB"/>
</dbReference>
<dbReference type="GO" id="GO:0030170">
    <property type="term" value="F:pyridoxal phosphate binding"/>
    <property type="evidence" value="ECO:0007669"/>
    <property type="project" value="TreeGrafter"/>
</dbReference>
<dbReference type="GO" id="GO:0006591">
    <property type="term" value="P:ornithine metabolic process"/>
    <property type="evidence" value="ECO:0000314"/>
    <property type="project" value="UniProtKB"/>
</dbReference>
<dbReference type="CDD" id="cd06815">
    <property type="entry name" value="PLPDE_III_AR_like_1"/>
    <property type="match status" value="1"/>
</dbReference>
<dbReference type="FunFam" id="3.20.20.10:FF:000013">
    <property type="entry name" value="Alanine/ornithine racemase family PLP-dependent enzyme"/>
    <property type="match status" value="1"/>
</dbReference>
<dbReference type="Gene3D" id="3.20.20.10">
    <property type="entry name" value="Alanine racemase"/>
    <property type="match status" value="1"/>
</dbReference>
<dbReference type="InterPro" id="IPR001608">
    <property type="entry name" value="Ala_racemase_N"/>
</dbReference>
<dbReference type="InterPro" id="IPR029066">
    <property type="entry name" value="PLP-binding_barrel"/>
</dbReference>
<dbReference type="NCBIfam" id="NF040742">
    <property type="entry name" value="racem_Orr"/>
    <property type="match status" value="1"/>
</dbReference>
<dbReference type="PANTHER" id="PTHR30511">
    <property type="entry name" value="ALANINE RACEMASE"/>
    <property type="match status" value="1"/>
</dbReference>
<dbReference type="PANTHER" id="PTHR30511:SF3">
    <property type="entry name" value="LYSINE RACEMASE"/>
    <property type="match status" value="1"/>
</dbReference>
<dbReference type="Pfam" id="PF01168">
    <property type="entry name" value="Ala_racemase_N"/>
    <property type="match status" value="1"/>
</dbReference>
<dbReference type="SUPFAM" id="SSF51419">
    <property type="entry name" value="PLP-binding barrel"/>
    <property type="match status" value="1"/>
</dbReference>
<evidence type="ECO:0000250" key="1">
    <source>
        <dbReference type="UniProtKB" id="P10724"/>
    </source>
</evidence>
<evidence type="ECO:0000269" key="2">
    <source>
    </source>
</evidence>
<evidence type="ECO:0000269" key="3">
    <source>
    </source>
</evidence>
<evidence type="ECO:0000303" key="4">
    <source>
    </source>
</evidence>
<evidence type="ECO:0000305" key="5"/>
<evidence type="ECO:0000312" key="6">
    <source>
        <dbReference type="EMBL" id="CAQ42981.1"/>
    </source>
</evidence>
<feature type="chain" id="PRO_0000438122" description="Ornithine racemase">
    <location>
        <begin position="1"/>
        <end position="353"/>
    </location>
</feature>
<feature type="active site" description="Proton acceptor" evidence="1">
    <location>
        <position position="35"/>
    </location>
</feature>
<feature type="binding site" evidence="1">
    <location>
        <position position="128"/>
    </location>
    <ligand>
        <name>substrate</name>
    </ligand>
</feature>
<feature type="modified residue" description="N6-(pyridoxal phosphate)lysine" evidence="1">
    <location>
        <position position="35"/>
    </location>
</feature>
<accession>C1FW08</accession>
<accession>E3PY93</accession>